<keyword id="KW-0238">DNA-binding</keyword>
<keyword id="KW-0475">Mercuric resistance</keyword>
<keyword id="KW-0614">Plasmid</keyword>
<keyword id="KW-0804">Transcription</keyword>
<keyword id="KW-0805">Transcription regulation</keyword>
<sequence length="121" mass="12966">MSAYTVSRLALDAGVSVHIVRDYLLRGLLRPVACTTGGYGLFDDTALQRLRFVRAAFEAGIGLDALARLCRALDAADGDGASAQLAVLRQLVERRREALASLEMQLAAMPTEPAQHAESLP</sequence>
<accession>Q52110</accession>
<accession>O08091</accession>
<feature type="chain" id="PRO_0000098128" description="HTH-type transcriptional regulator MerD">
    <location>
        <begin position="1"/>
        <end position="121"/>
    </location>
</feature>
<feature type="domain" description="HTH merR-type" evidence="1">
    <location>
        <begin position="3"/>
        <end position="72"/>
    </location>
</feature>
<feature type="DNA-binding region" description="H-T-H motif" evidence="1">
    <location>
        <begin position="6"/>
        <end position="25"/>
    </location>
</feature>
<geneLocation type="plasmid">
    <name>pKLH2</name>
</geneLocation>
<reference key="1">
    <citation type="journal article" date="1993" name="Plasmid">
        <title>Molecular characterization of an aberrant mercury resistance transposable element from an environmental Acinetobacter strain.</title>
        <authorList>
            <person name="Kholodii G.Y."/>
            <person name="Lomovskaya O.L."/>
            <person name="Gorlenko Z.M."/>
            <person name="Mindlin S.Z."/>
            <person name="Yurieva O.V."/>
            <person name="Nikiforov V.G."/>
        </authorList>
    </citation>
    <scope>NUCLEOTIDE SEQUENCE [GENOMIC DNA]</scope>
</reference>
<reference key="2">
    <citation type="journal article" date="1997" name="Mol. Microbiol.">
        <title>Intercontinental spread of promiscuous mercury-resistance transposons in environmental bacteria.</title>
        <authorList>
            <person name="Yurieva O."/>
            <person name="Kholodii G."/>
            <person name="Minakhin L."/>
            <person name="Gorlenko Z."/>
            <person name="Kalyaeva E."/>
            <person name="Mindlin S."/>
            <person name="Nikiforov V."/>
        </authorList>
    </citation>
    <scope>NUCLEOTIDE SEQUENCE [GENOMIC DNA]</scope>
</reference>
<name>MERD_ACICA</name>
<dbReference type="EMBL" id="AF213017">
    <property type="protein sequence ID" value="AAA19683.1"/>
    <property type="molecule type" value="Genomic_DNA"/>
</dbReference>
<dbReference type="RefSeq" id="WP_001277463.1">
    <property type="nucleotide sequence ID" value="NZ_MOSW01000200.1"/>
</dbReference>
<dbReference type="SMR" id="Q52110"/>
<dbReference type="GeneID" id="92833620"/>
<dbReference type="GO" id="GO:0003677">
    <property type="term" value="F:DNA binding"/>
    <property type="evidence" value="ECO:0007669"/>
    <property type="project" value="UniProtKB-KW"/>
</dbReference>
<dbReference type="GO" id="GO:0003700">
    <property type="term" value="F:DNA-binding transcription factor activity"/>
    <property type="evidence" value="ECO:0007669"/>
    <property type="project" value="InterPro"/>
</dbReference>
<dbReference type="GO" id="GO:0045892">
    <property type="term" value="P:negative regulation of DNA-templated transcription"/>
    <property type="evidence" value="ECO:0007669"/>
    <property type="project" value="InterPro"/>
</dbReference>
<dbReference type="GO" id="GO:0046689">
    <property type="term" value="P:response to mercury ion"/>
    <property type="evidence" value="ECO:0007669"/>
    <property type="project" value="UniProtKB-KW"/>
</dbReference>
<dbReference type="CDD" id="cd01111">
    <property type="entry name" value="HTH_MerD"/>
    <property type="match status" value="1"/>
</dbReference>
<dbReference type="Gene3D" id="1.10.1660.10">
    <property type="match status" value="1"/>
</dbReference>
<dbReference type="InterPro" id="IPR009061">
    <property type="entry name" value="DNA-bd_dom_put_sf"/>
</dbReference>
<dbReference type="InterPro" id="IPR011797">
    <property type="entry name" value="MerD"/>
</dbReference>
<dbReference type="InterPro" id="IPR000551">
    <property type="entry name" value="MerR-type_HTH_dom"/>
</dbReference>
<dbReference type="InterPro" id="IPR047057">
    <property type="entry name" value="MerR_fam"/>
</dbReference>
<dbReference type="NCBIfam" id="NF033783">
    <property type="entry name" value="coreg_MerD"/>
    <property type="match status" value="1"/>
</dbReference>
<dbReference type="NCBIfam" id="TIGR02054">
    <property type="entry name" value="MerD"/>
    <property type="match status" value="1"/>
</dbReference>
<dbReference type="PANTHER" id="PTHR30204:SF93">
    <property type="entry name" value="HTH MERR-TYPE DOMAIN-CONTAINING PROTEIN"/>
    <property type="match status" value="1"/>
</dbReference>
<dbReference type="PANTHER" id="PTHR30204">
    <property type="entry name" value="REDOX-CYCLING DRUG-SENSING TRANSCRIPTIONAL ACTIVATOR SOXR"/>
    <property type="match status" value="1"/>
</dbReference>
<dbReference type="Pfam" id="PF13411">
    <property type="entry name" value="MerR_1"/>
    <property type="match status" value="1"/>
</dbReference>
<dbReference type="PRINTS" id="PR00040">
    <property type="entry name" value="HTHMERR"/>
</dbReference>
<dbReference type="SMART" id="SM00422">
    <property type="entry name" value="HTH_MERR"/>
    <property type="match status" value="1"/>
</dbReference>
<dbReference type="SUPFAM" id="SSF46955">
    <property type="entry name" value="Putative DNA-binding domain"/>
    <property type="match status" value="1"/>
</dbReference>
<dbReference type="PROSITE" id="PS50937">
    <property type="entry name" value="HTH_MERR_2"/>
    <property type="match status" value="1"/>
</dbReference>
<evidence type="ECO:0000255" key="1">
    <source>
        <dbReference type="PROSITE-ProRule" id="PRU00254"/>
    </source>
</evidence>
<protein>
    <recommendedName>
        <fullName>HTH-type transcriptional regulator MerD</fullName>
    </recommendedName>
    <alternativeName>
        <fullName>Mercuric resistance protein MerD</fullName>
    </alternativeName>
</protein>
<organism>
    <name type="scientific">Acinetobacter calcoaceticus</name>
    <dbReference type="NCBI Taxonomy" id="471"/>
    <lineage>
        <taxon>Bacteria</taxon>
        <taxon>Pseudomonadati</taxon>
        <taxon>Pseudomonadota</taxon>
        <taxon>Gammaproteobacteria</taxon>
        <taxon>Moraxellales</taxon>
        <taxon>Moraxellaceae</taxon>
        <taxon>Acinetobacter</taxon>
        <taxon>Acinetobacter calcoaceticus/baumannii complex</taxon>
    </lineage>
</organism>
<proteinExistence type="predicted"/>
<gene>
    <name type="primary">merD</name>
</gene>